<evidence type="ECO:0000255" key="1">
    <source>
        <dbReference type="HAMAP-Rule" id="MF_01302"/>
    </source>
</evidence>
<evidence type="ECO:0000305" key="2"/>
<sequence length="132" mass="14437">MSMTDPIADMLTRIRNANMARLQKVDIPSSNLKVNLANVLKAEGFIKNYKVIADSRQGVLRVYLKYIDEKDPVINEIKRVSKPGSRVYVGSDKIPSVKNGMGVAILSTSKGLITDKSAREAGVGGEVLCTVW</sequence>
<name>RS8_GEOSL</name>
<feature type="chain" id="PRO_0000126413" description="Small ribosomal subunit protein uS8">
    <location>
        <begin position="1"/>
        <end position="132"/>
    </location>
</feature>
<dbReference type="EMBL" id="AE017180">
    <property type="protein sequence ID" value="AAR36236.1"/>
    <property type="molecule type" value="Genomic_DNA"/>
</dbReference>
<dbReference type="RefSeq" id="NP_953886.1">
    <property type="nucleotide sequence ID" value="NC_002939.5"/>
</dbReference>
<dbReference type="RefSeq" id="WP_010943472.1">
    <property type="nucleotide sequence ID" value="NC_002939.5"/>
</dbReference>
<dbReference type="SMR" id="Q749A1"/>
<dbReference type="FunCoup" id="Q749A1">
    <property type="interactions" value="557"/>
</dbReference>
<dbReference type="STRING" id="243231.GSU2843"/>
<dbReference type="EnsemblBacteria" id="AAR36236">
    <property type="protein sequence ID" value="AAR36236"/>
    <property type="gene ID" value="GSU2843"/>
</dbReference>
<dbReference type="KEGG" id="gsu:GSU2843"/>
<dbReference type="PATRIC" id="fig|243231.5.peg.2869"/>
<dbReference type="eggNOG" id="COG0096">
    <property type="taxonomic scope" value="Bacteria"/>
</dbReference>
<dbReference type="HOGENOM" id="CLU_098428_0_2_7"/>
<dbReference type="InParanoid" id="Q749A1"/>
<dbReference type="OrthoDB" id="9802617at2"/>
<dbReference type="Proteomes" id="UP000000577">
    <property type="component" value="Chromosome"/>
</dbReference>
<dbReference type="GO" id="GO:0022627">
    <property type="term" value="C:cytosolic small ribosomal subunit"/>
    <property type="evidence" value="ECO:0000318"/>
    <property type="project" value="GO_Central"/>
</dbReference>
<dbReference type="GO" id="GO:0019843">
    <property type="term" value="F:rRNA binding"/>
    <property type="evidence" value="ECO:0007669"/>
    <property type="project" value="UniProtKB-UniRule"/>
</dbReference>
<dbReference type="GO" id="GO:0003735">
    <property type="term" value="F:structural constituent of ribosome"/>
    <property type="evidence" value="ECO:0000318"/>
    <property type="project" value="GO_Central"/>
</dbReference>
<dbReference type="GO" id="GO:0006412">
    <property type="term" value="P:translation"/>
    <property type="evidence" value="ECO:0007669"/>
    <property type="project" value="UniProtKB-UniRule"/>
</dbReference>
<dbReference type="FunFam" id="3.30.1370.30:FF:000002">
    <property type="entry name" value="30S ribosomal protein S8"/>
    <property type="match status" value="1"/>
</dbReference>
<dbReference type="FunFam" id="3.30.1490.10:FF:000001">
    <property type="entry name" value="30S ribosomal protein S8"/>
    <property type="match status" value="1"/>
</dbReference>
<dbReference type="Gene3D" id="3.30.1370.30">
    <property type="match status" value="1"/>
</dbReference>
<dbReference type="Gene3D" id="3.30.1490.10">
    <property type="match status" value="1"/>
</dbReference>
<dbReference type="HAMAP" id="MF_01302_B">
    <property type="entry name" value="Ribosomal_uS8_B"/>
    <property type="match status" value="1"/>
</dbReference>
<dbReference type="InterPro" id="IPR000630">
    <property type="entry name" value="Ribosomal_uS8"/>
</dbReference>
<dbReference type="InterPro" id="IPR047863">
    <property type="entry name" value="Ribosomal_uS8_CS"/>
</dbReference>
<dbReference type="InterPro" id="IPR035987">
    <property type="entry name" value="Ribosomal_uS8_sf"/>
</dbReference>
<dbReference type="NCBIfam" id="NF001109">
    <property type="entry name" value="PRK00136.1"/>
    <property type="match status" value="1"/>
</dbReference>
<dbReference type="PANTHER" id="PTHR11758">
    <property type="entry name" value="40S RIBOSOMAL PROTEIN S15A"/>
    <property type="match status" value="1"/>
</dbReference>
<dbReference type="Pfam" id="PF00410">
    <property type="entry name" value="Ribosomal_S8"/>
    <property type="match status" value="1"/>
</dbReference>
<dbReference type="SUPFAM" id="SSF56047">
    <property type="entry name" value="Ribosomal protein S8"/>
    <property type="match status" value="1"/>
</dbReference>
<dbReference type="PROSITE" id="PS00053">
    <property type="entry name" value="RIBOSOMAL_S8"/>
    <property type="match status" value="1"/>
</dbReference>
<protein>
    <recommendedName>
        <fullName evidence="1">Small ribosomal subunit protein uS8</fullName>
    </recommendedName>
    <alternativeName>
        <fullName evidence="2">30S ribosomal protein S8</fullName>
    </alternativeName>
</protein>
<proteinExistence type="inferred from homology"/>
<reference key="1">
    <citation type="journal article" date="2003" name="Science">
        <title>Genome of Geobacter sulfurreducens: metal reduction in subsurface environments.</title>
        <authorList>
            <person name="Methe B.A."/>
            <person name="Nelson K.E."/>
            <person name="Eisen J.A."/>
            <person name="Paulsen I.T."/>
            <person name="Nelson W.C."/>
            <person name="Heidelberg J.F."/>
            <person name="Wu D."/>
            <person name="Wu M."/>
            <person name="Ward N.L."/>
            <person name="Beanan M.J."/>
            <person name="Dodson R.J."/>
            <person name="Madupu R."/>
            <person name="Brinkac L.M."/>
            <person name="Daugherty S.C."/>
            <person name="DeBoy R.T."/>
            <person name="Durkin A.S."/>
            <person name="Gwinn M.L."/>
            <person name="Kolonay J.F."/>
            <person name="Sullivan S.A."/>
            <person name="Haft D.H."/>
            <person name="Selengut J."/>
            <person name="Davidsen T.M."/>
            <person name="Zafar N."/>
            <person name="White O."/>
            <person name="Tran B."/>
            <person name="Romero C."/>
            <person name="Forberger H.A."/>
            <person name="Weidman J.F."/>
            <person name="Khouri H.M."/>
            <person name="Feldblyum T.V."/>
            <person name="Utterback T.R."/>
            <person name="Van Aken S.E."/>
            <person name="Lovley D.R."/>
            <person name="Fraser C.M."/>
        </authorList>
    </citation>
    <scope>NUCLEOTIDE SEQUENCE [LARGE SCALE GENOMIC DNA]</scope>
    <source>
        <strain>ATCC 51573 / DSM 12127 / PCA</strain>
    </source>
</reference>
<keyword id="KW-1185">Reference proteome</keyword>
<keyword id="KW-0687">Ribonucleoprotein</keyword>
<keyword id="KW-0689">Ribosomal protein</keyword>
<keyword id="KW-0694">RNA-binding</keyword>
<keyword id="KW-0699">rRNA-binding</keyword>
<gene>
    <name evidence="1" type="primary">rpsH</name>
    <name type="ordered locus">GSU2843</name>
</gene>
<comment type="function">
    <text evidence="1">One of the primary rRNA binding proteins, it binds directly to 16S rRNA central domain where it helps coordinate assembly of the platform of the 30S subunit.</text>
</comment>
<comment type="subunit">
    <text evidence="1">Part of the 30S ribosomal subunit. Contacts proteins S5 and S12.</text>
</comment>
<comment type="similarity">
    <text evidence="1">Belongs to the universal ribosomal protein uS8 family.</text>
</comment>
<accession>Q749A1</accession>
<organism>
    <name type="scientific">Geobacter sulfurreducens (strain ATCC 51573 / DSM 12127 / PCA)</name>
    <dbReference type="NCBI Taxonomy" id="243231"/>
    <lineage>
        <taxon>Bacteria</taxon>
        <taxon>Pseudomonadati</taxon>
        <taxon>Thermodesulfobacteriota</taxon>
        <taxon>Desulfuromonadia</taxon>
        <taxon>Geobacterales</taxon>
        <taxon>Geobacteraceae</taxon>
        <taxon>Geobacter</taxon>
    </lineage>
</organism>